<organism>
    <name type="scientific">Shewanella sp. (strain MR-4)</name>
    <dbReference type="NCBI Taxonomy" id="60480"/>
    <lineage>
        <taxon>Bacteria</taxon>
        <taxon>Pseudomonadati</taxon>
        <taxon>Pseudomonadota</taxon>
        <taxon>Gammaproteobacteria</taxon>
        <taxon>Alteromonadales</taxon>
        <taxon>Shewanellaceae</taxon>
        <taxon>Shewanella</taxon>
    </lineage>
</organism>
<name>GLMU_SHESM</name>
<gene>
    <name evidence="1" type="primary">glmU</name>
    <name type="ordered locus">Shewmr4_3923</name>
</gene>
<keyword id="KW-0012">Acyltransferase</keyword>
<keyword id="KW-0133">Cell shape</keyword>
<keyword id="KW-0961">Cell wall biogenesis/degradation</keyword>
<keyword id="KW-0963">Cytoplasm</keyword>
<keyword id="KW-0460">Magnesium</keyword>
<keyword id="KW-0479">Metal-binding</keyword>
<keyword id="KW-0511">Multifunctional enzyme</keyword>
<keyword id="KW-0548">Nucleotidyltransferase</keyword>
<keyword id="KW-0573">Peptidoglycan synthesis</keyword>
<keyword id="KW-0677">Repeat</keyword>
<keyword id="KW-0808">Transferase</keyword>
<evidence type="ECO:0000255" key="1">
    <source>
        <dbReference type="HAMAP-Rule" id="MF_01631"/>
    </source>
</evidence>
<accession>Q0HD81</accession>
<feature type="chain" id="PRO_0000263155" description="Bifunctional protein GlmU">
    <location>
        <begin position="1"/>
        <end position="454"/>
    </location>
</feature>
<feature type="region of interest" description="Pyrophosphorylase" evidence="1">
    <location>
        <begin position="1"/>
        <end position="226"/>
    </location>
</feature>
<feature type="region of interest" description="Linker" evidence="1">
    <location>
        <begin position="227"/>
        <end position="247"/>
    </location>
</feature>
<feature type="region of interest" description="N-acetyltransferase" evidence="1">
    <location>
        <begin position="248"/>
        <end position="454"/>
    </location>
</feature>
<feature type="active site" description="Proton acceptor" evidence="1">
    <location>
        <position position="360"/>
    </location>
</feature>
<feature type="binding site" evidence="1">
    <location>
        <begin position="8"/>
        <end position="11"/>
    </location>
    <ligand>
        <name>UDP-N-acetyl-alpha-D-glucosamine</name>
        <dbReference type="ChEBI" id="CHEBI:57705"/>
    </ligand>
</feature>
<feature type="binding site" evidence="1">
    <location>
        <position position="22"/>
    </location>
    <ligand>
        <name>UDP-N-acetyl-alpha-D-glucosamine</name>
        <dbReference type="ChEBI" id="CHEBI:57705"/>
    </ligand>
</feature>
<feature type="binding site" evidence="1">
    <location>
        <position position="73"/>
    </location>
    <ligand>
        <name>UDP-N-acetyl-alpha-D-glucosamine</name>
        <dbReference type="ChEBI" id="CHEBI:57705"/>
    </ligand>
</feature>
<feature type="binding site" evidence="1">
    <location>
        <begin position="78"/>
        <end position="79"/>
    </location>
    <ligand>
        <name>UDP-N-acetyl-alpha-D-glucosamine</name>
        <dbReference type="ChEBI" id="CHEBI:57705"/>
    </ligand>
</feature>
<feature type="binding site" evidence="1">
    <location>
        <begin position="100"/>
        <end position="102"/>
    </location>
    <ligand>
        <name>UDP-N-acetyl-alpha-D-glucosamine</name>
        <dbReference type="ChEBI" id="CHEBI:57705"/>
    </ligand>
</feature>
<feature type="binding site" evidence="1">
    <location>
        <position position="102"/>
    </location>
    <ligand>
        <name>Mg(2+)</name>
        <dbReference type="ChEBI" id="CHEBI:18420"/>
    </ligand>
</feature>
<feature type="binding site" evidence="1">
    <location>
        <position position="137"/>
    </location>
    <ligand>
        <name>UDP-N-acetyl-alpha-D-glucosamine</name>
        <dbReference type="ChEBI" id="CHEBI:57705"/>
    </ligand>
</feature>
<feature type="binding site" evidence="1">
    <location>
        <position position="151"/>
    </location>
    <ligand>
        <name>UDP-N-acetyl-alpha-D-glucosamine</name>
        <dbReference type="ChEBI" id="CHEBI:57705"/>
    </ligand>
</feature>
<feature type="binding site" evidence="1">
    <location>
        <position position="166"/>
    </location>
    <ligand>
        <name>UDP-N-acetyl-alpha-D-glucosamine</name>
        <dbReference type="ChEBI" id="CHEBI:57705"/>
    </ligand>
</feature>
<feature type="binding site" evidence="1">
    <location>
        <position position="224"/>
    </location>
    <ligand>
        <name>Mg(2+)</name>
        <dbReference type="ChEBI" id="CHEBI:18420"/>
    </ligand>
</feature>
<feature type="binding site" evidence="1">
    <location>
        <position position="224"/>
    </location>
    <ligand>
        <name>UDP-N-acetyl-alpha-D-glucosamine</name>
        <dbReference type="ChEBI" id="CHEBI:57705"/>
    </ligand>
</feature>
<feature type="binding site" evidence="1">
    <location>
        <position position="330"/>
    </location>
    <ligand>
        <name>UDP-N-acetyl-alpha-D-glucosamine</name>
        <dbReference type="ChEBI" id="CHEBI:57705"/>
    </ligand>
</feature>
<feature type="binding site" evidence="1">
    <location>
        <position position="348"/>
    </location>
    <ligand>
        <name>UDP-N-acetyl-alpha-D-glucosamine</name>
        <dbReference type="ChEBI" id="CHEBI:57705"/>
    </ligand>
</feature>
<feature type="binding site" evidence="1">
    <location>
        <position position="363"/>
    </location>
    <ligand>
        <name>UDP-N-acetyl-alpha-D-glucosamine</name>
        <dbReference type="ChEBI" id="CHEBI:57705"/>
    </ligand>
</feature>
<feature type="binding site" evidence="1">
    <location>
        <position position="374"/>
    </location>
    <ligand>
        <name>UDP-N-acetyl-alpha-D-glucosamine</name>
        <dbReference type="ChEBI" id="CHEBI:57705"/>
    </ligand>
</feature>
<feature type="binding site" evidence="1">
    <location>
        <position position="377"/>
    </location>
    <ligand>
        <name>acetyl-CoA</name>
        <dbReference type="ChEBI" id="CHEBI:57288"/>
    </ligand>
</feature>
<feature type="binding site" evidence="1">
    <location>
        <begin position="383"/>
        <end position="384"/>
    </location>
    <ligand>
        <name>acetyl-CoA</name>
        <dbReference type="ChEBI" id="CHEBI:57288"/>
    </ligand>
</feature>
<feature type="binding site" evidence="1">
    <location>
        <position position="402"/>
    </location>
    <ligand>
        <name>acetyl-CoA</name>
        <dbReference type="ChEBI" id="CHEBI:57288"/>
    </ligand>
</feature>
<feature type="binding site" evidence="1">
    <location>
        <position position="420"/>
    </location>
    <ligand>
        <name>acetyl-CoA</name>
        <dbReference type="ChEBI" id="CHEBI:57288"/>
    </ligand>
</feature>
<feature type="binding site" evidence="1">
    <location>
        <position position="437"/>
    </location>
    <ligand>
        <name>acetyl-CoA</name>
        <dbReference type="ChEBI" id="CHEBI:57288"/>
    </ligand>
</feature>
<dbReference type="EC" id="2.7.7.23" evidence="1"/>
<dbReference type="EC" id="2.3.1.157" evidence="1"/>
<dbReference type="EMBL" id="CP000446">
    <property type="protein sequence ID" value="ABI40986.1"/>
    <property type="molecule type" value="Genomic_DNA"/>
</dbReference>
<dbReference type="RefSeq" id="WP_011624644.1">
    <property type="nucleotide sequence ID" value="NC_008321.1"/>
</dbReference>
<dbReference type="SMR" id="Q0HD81"/>
<dbReference type="KEGG" id="she:Shewmr4_3923"/>
<dbReference type="HOGENOM" id="CLU_029499_15_2_6"/>
<dbReference type="UniPathway" id="UPA00113">
    <property type="reaction ID" value="UER00532"/>
</dbReference>
<dbReference type="UniPathway" id="UPA00113">
    <property type="reaction ID" value="UER00533"/>
</dbReference>
<dbReference type="UniPathway" id="UPA00973"/>
<dbReference type="GO" id="GO:0005737">
    <property type="term" value="C:cytoplasm"/>
    <property type="evidence" value="ECO:0007669"/>
    <property type="project" value="UniProtKB-SubCell"/>
</dbReference>
<dbReference type="GO" id="GO:0016020">
    <property type="term" value="C:membrane"/>
    <property type="evidence" value="ECO:0007669"/>
    <property type="project" value="GOC"/>
</dbReference>
<dbReference type="GO" id="GO:0019134">
    <property type="term" value="F:glucosamine-1-phosphate N-acetyltransferase activity"/>
    <property type="evidence" value="ECO:0007669"/>
    <property type="project" value="UniProtKB-UniRule"/>
</dbReference>
<dbReference type="GO" id="GO:0000287">
    <property type="term" value="F:magnesium ion binding"/>
    <property type="evidence" value="ECO:0007669"/>
    <property type="project" value="UniProtKB-UniRule"/>
</dbReference>
<dbReference type="GO" id="GO:0003977">
    <property type="term" value="F:UDP-N-acetylglucosamine diphosphorylase activity"/>
    <property type="evidence" value="ECO:0007669"/>
    <property type="project" value="UniProtKB-UniRule"/>
</dbReference>
<dbReference type="GO" id="GO:0000902">
    <property type="term" value="P:cell morphogenesis"/>
    <property type="evidence" value="ECO:0007669"/>
    <property type="project" value="UniProtKB-UniRule"/>
</dbReference>
<dbReference type="GO" id="GO:0071555">
    <property type="term" value="P:cell wall organization"/>
    <property type="evidence" value="ECO:0007669"/>
    <property type="project" value="UniProtKB-KW"/>
</dbReference>
<dbReference type="GO" id="GO:0009245">
    <property type="term" value="P:lipid A biosynthetic process"/>
    <property type="evidence" value="ECO:0007669"/>
    <property type="project" value="UniProtKB-UniRule"/>
</dbReference>
<dbReference type="GO" id="GO:0009252">
    <property type="term" value="P:peptidoglycan biosynthetic process"/>
    <property type="evidence" value="ECO:0007669"/>
    <property type="project" value="UniProtKB-UniRule"/>
</dbReference>
<dbReference type="GO" id="GO:0008360">
    <property type="term" value="P:regulation of cell shape"/>
    <property type="evidence" value="ECO:0007669"/>
    <property type="project" value="UniProtKB-KW"/>
</dbReference>
<dbReference type="GO" id="GO:0006048">
    <property type="term" value="P:UDP-N-acetylglucosamine biosynthetic process"/>
    <property type="evidence" value="ECO:0007669"/>
    <property type="project" value="UniProtKB-UniPathway"/>
</dbReference>
<dbReference type="CDD" id="cd02540">
    <property type="entry name" value="GT2_GlmU_N_bac"/>
    <property type="match status" value="1"/>
</dbReference>
<dbReference type="CDD" id="cd03353">
    <property type="entry name" value="LbH_GlmU_C"/>
    <property type="match status" value="1"/>
</dbReference>
<dbReference type="Gene3D" id="2.160.10.10">
    <property type="entry name" value="Hexapeptide repeat proteins"/>
    <property type="match status" value="1"/>
</dbReference>
<dbReference type="Gene3D" id="3.90.550.10">
    <property type="entry name" value="Spore Coat Polysaccharide Biosynthesis Protein SpsA, Chain A"/>
    <property type="match status" value="1"/>
</dbReference>
<dbReference type="HAMAP" id="MF_01631">
    <property type="entry name" value="GlmU"/>
    <property type="match status" value="1"/>
</dbReference>
<dbReference type="InterPro" id="IPR005882">
    <property type="entry name" value="Bifunctional_GlmU"/>
</dbReference>
<dbReference type="InterPro" id="IPR050065">
    <property type="entry name" value="GlmU-like"/>
</dbReference>
<dbReference type="InterPro" id="IPR038009">
    <property type="entry name" value="GlmU_C_LbH"/>
</dbReference>
<dbReference type="InterPro" id="IPR001451">
    <property type="entry name" value="Hexapep"/>
</dbReference>
<dbReference type="InterPro" id="IPR018357">
    <property type="entry name" value="Hexapep_transf_CS"/>
</dbReference>
<dbReference type="InterPro" id="IPR025877">
    <property type="entry name" value="MobA-like_NTP_Trfase"/>
</dbReference>
<dbReference type="InterPro" id="IPR029044">
    <property type="entry name" value="Nucleotide-diphossugar_trans"/>
</dbReference>
<dbReference type="InterPro" id="IPR011004">
    <property type="entry name" value="Trimer_LpxA-like_sf"/>
</dbReference>
<dbReference type="NCBIfam" id="TIGR01173">
    <property type="entry name" value="glmU"/>
    <property type="match status" value="1"/>
</dbReference>
<dbReference type="NCBIfam" id="NF006986">
    <property type="entry name" value="PRK09451.1"/>
    <property type="match status" value="1"/>
</dbReference>
<dbReference type="PANTHER" id="PTHR43584:SF3">
    <property type="entry name" value="BIFUNCTIONAL PROTEIN GLMU"/>
    <property type="match status" value="1"/>
</dbReference>
<dbReference type="PANTHER" id="PTHR43584">
    <property type="entry name" value="NUCLEOTIDYL TRANSFERASE"/>
    <property type="match status" value="1"/>
</dbReference>
<dbReference type="Pfam" id="PF00132">
    <property type="entry name" value="Hexapep"/>
    <property type="match status" value="1"/>
</dbReference>
<dbReference type="Pfam" id="PF12804">
    <property type="entry name" value="NTP_transf_3"/>
    <property type="match status" value="1"/>
</dbReference>
<dbReference type="SUPFAM" id="SSF53448">
    <property type="entry name" value="Nucleotide-diphospho-sugar transferases"/>
    <property type="match status" value="1"/>
</dbReference>
<dbReference type="SUPFAM" id="SSF51161">
    <property type="entry name" value="Trimeric LpxA-like enzymes"/>
    <property type="match status" value="1"/>
</dbReference>
<dbReference type="PROSITE" id="PS00101">
    <property type="entry name" value="HEXAPEP_TRANSFERASES"/>
    <property type="match status" value="1"/>
</dbReference>
<proteinExistence type="inferred from homology"/>
<sequence>MALNVVILAAGKGTRMRSDLPKVLHPIAHKSMVQHVIDTAHSIGSDAIQLVYGYGADKLKSALGEQQLNWMLQAEQLGTGHAVAQAIPNIDDNDTVLILYGDVPLIQASTLEALLAARPDHGVAILTVNLVNPTGYGRIVREQGKVVGIVEQKDANAEQLAINEINTGIMAVPGKALKTWLGRLSNNNAQGEYYLTDIIAMAHADGVEINTAQPQSAIEVEGANNRVQLAQLERAYQAREAEKLMIAGANLRDPSRIDIRGEVTVGMDVMVDVNVIFEGKVVIGNNVSIGAGAILIDCEIADNAEIKPYSIIEGAKLGVAASAGPFARLRPGAELMQDAHIGNFVEMKKAVLGVGSKAGHLAYLGDAQIGAGVNIGAGTITCNYDGANKHLTVIEDNVFVGSDTQLVAPVTIGKGATLGAGSTITRDVGEDELVITRVKQKHLTGWQRPVKIKK</sequence>
<comment type="function">
    <text evidence="1">Catalyzes the last two sequential reactions in the de novo biosynthetic pathway for UDP-N-acetylglucosamine (UDP-GlcNAc). The C-terminal domain catalyzes the transfer of acetyl group from acetyl coenzyme A to glucosamine-1-phosphate (GlcN-1-P) to produce N-acetylglucosamine-1-phosphate (GlcNAc-1-P), which is converted into UDP-GlcNAc by the transfer of uridine 5-monophosphate (from uridine 5-triphosphate), a reaction catalyzed by the N-terminal domain.</text>
</comment>
<comment type="catalytic activity">
    <reaction evidence="1">
        <text>alpha-D-glucosamine 1-phosphate + acetyl-CoA = N-acetyl-alpha-D-glucosamine 1-phosphate + CoA + H(+)</text>
        <dbReference type="Rhea" id="RHEA:13725"/>
        <dbReference type="ChEBI" id="CHEBI:15378"/>
        <dbReference type="ChEBI" id="CHEBI:57287"/>
        <dbReference type="ChEBI" id="CHEBI:57288"/>
        <dbReference type="ChEBI" id="CHEBI:57776"/>
        <dbReference type="ChEBI" id="CHEBI:58516"/>
        <dbReference type="EC" id="2.3.1.157"/>
    </reaction>
</comment>
<comment type="catalytic activity">
    <reaction evidence="1">
        <text>N-acetyl-alpha-D-glucosamine 1-phosphate + UTP + H(+) = UDP-N-acetyl-alpha-D-glucosamine + diphosphate</text>
        <dbReference type="Rhea" id="RHEA:13509"/>
        <dbReference type="ChEBI" id="CHEBI:15378"/>
        <dbReference type="ChEBI" id="CHEBI:33019"/>
        <dbReference type="ChEBI" id="CHEBI:46398"/>
        <dbReference type="ChEBI" id="CHEBI:57705"/>
        <dbReference type="ChEBI" id="CHEBI:57776"/>
        <dbReference type="EC" id="2.7.7.23"/>
    </reaction>
</comment>
<comment type="cofactor">
    <cofactor evidence="1">
        <name>Mg(2+)</name>
        <dbReference type="ChEBI" id="CHEBI:18420"/>
    </cofactor>
    <text evidence="1">Binds 1 Mg(2+) ion per subunit.</text>
</comment>
<comment type="pathway">
    <text evidence="1">Nucleotide-sugar biosynthesis; UDP-N-acetyl-alpha-D-glucosamine biosynthesis; N-acetyl-alpha-D-glucosamine 1-phosphate from alpha-D-glucosamine 6-phosphate (route II): step 2/2.</text>
</comment>
<comment type="pathway">
    <text evidence="1">Nucleotide-sugar biosynthesis; UDP-N-acetyl-alpha-D-glucosamine biosynthesis; UDP-N-acetyl-alpha-D-glucosamine from N-acetyl-alpha-D-glucosamine 1-phosphate: step 1/1.</text>
</comment>
<comment type="pathway">
    <text evidence="1">Bacterial outer membrane biogenesis; LPS lipid A biosynthesis.</text>
</comment>
<comment type="subunit">
    <text evidence="1">Homotrimer.</text>
</comment>
<comment type="subcellular location">
    <subcellularLocation>
        <location evidence="1">Cytoplasm</location>
    </subcellularLocation>
</comment>
<comment type="similarity">
    <text evidence="1">In the N-terminal section; belongs to the N-acetylglucosamine-1-phosphate uridyltransferase family.</text>
</comment>
<comment type="similarity">
    <text evidence="1">In the C-terminal section; belongs to the transferase hexapeptide repeat family.</text>
</comment>
<protein>
    <recommendedName>
        <fullName evidence="1">Bifunctional protein GlmU</fullName>
    </recommendedName>
    <domain>
        <recommendedName>
            <fullName evidence="1">UDP-N-acetylglucosamine pyrophosphorylase</fullName>
            <ecNumber evidence="1">2.7.7.23</ecNumber>
        </recommendedName>
        <alternativeName>
            <fullName evidence="1">N-acetylglucosamine-1-phosphate uridyltransferase</fullName>
        </alternativeName>
    </domain>
    <domain>
        <recommendedName>
            <fullName evidence="1">Glucosamine-1-phosphate N-acetyltransferase</fullName>
            <ecNumber evidence="1">2.3.1.157</ecNumber>
        </recommendedName>
    </domain>
</protein>
<reference key="1">
    <citation type="submission" date="2006-08" db="EMBL/GenBank/DDBJ databases">
        <title>Complete sequence of Shewanella sp. MR-4.</title>
        <authorList>
            <consortium name="US DOE Joint Genome Institute"/>
            <person name="Copeland A."/>
            <person name="Lucas S."/>
            <person name="Lapidus A."/>
            <person name="Barry K."/>
            <person name="Detter J.C."/>
            <person name="Glavina del Rio T."/>
            <person name="Hammon N."/>
            <person name="Israni S."/>
            <person name="Dalin E."/>
            <person name="Tice H."/>
            <person name="Pitluck S."/>
            <person name="Kiss H."/>
            <person name="Brettin T."/>
            <person name="Bruce D."/>
            <person name="Han C."/>
            <person name="Tapia R."/>
            <person name="Gilna P."/>
            <person name="Schmutz J."/>
            <person name="Larimer F."/>
            <person name="Land M."/>
            <person name="Hauser L."/>
            <person name="Kyrpides N."/>
            <person name="Mikhailova N."/>
            <person name="Nealson K."/>
            <person name="Konstantinidis K."/>
            <person name="Klappenbach J."/>
            <person name="Tiedje J."/>
            <person name="Richardson P."/>
        </authorList>
    </citation>
    <scope>NUCLEOTIDE SEQUENCE [LARGE SCALE GENOMIC DNA]</scope>
    <source>
        <strain>MR-4</strain>
    </source>
</reference>